<feature type="chain" id="PRO_0000070548" description="Photosystem II reaction center protein H">
    <location>
        <begin position="1"/>
        <end position="66"/>
    </location>
</feature>
<feature type="transmembrane region" description="Helical" evidence="1">
    <location>
        <begin position="29"/>
        <end position="49"/>
    </location>
</feature>
<name>PSBH_PARMW</name>
<accession>Q7U9I7</accession>
<evidence type="ECO:0000255" key="1">
    <source>
        <dbReference type="HAMAP-Rule" id="MF_00752"/>
    </source>
</evidence>
<comment type="function">
    <text evidence="1">One of the components of the core complex of photosystem II (PSII), required for its stability and/or assembly. PSII is a light-driven water:plastoquinone oxidoreductase that uses light energy to abstract electrons from H(2)O, generating O(2) and a proton gradient subsequently used for ATP formation. It consists of a core antenna complex that captures photons, and an electron transfer chain that converts photonic excitation into a charge separation.</text>
</comment>
<comment type="subunit">
    <text evidence="1">PSII is composed of 1 copy each of membrane proteins PsbA, PsbB, PsbC, PsbD, PsbE, PsbF, PsbH, PsbI, PsbJ, PsbK, PsbL, PsbM, PsbT, PsbX, PsbY, PsbZ, Psb30/Ycf12, peripheral proteins PsbO, CyanoQ (PsbQ), PsbU, PsbV and a large number of cofactors. It forms dimeric complexes.</text>
</comment>
<comment type="subcellular location">
    <subcellularLocation>
        <location evidence="1">Cellular thylakoid membrane</location>
        <topology evidence="1">Single-pass membrane protein</topology>
    </subcellularLocation>
</comment>
<comment type="similarity">
    <text evidence="1">Belongs to the PsbH family.</text>
</comment>
<keyword id="KW-0472">Membrane</keyword>
<keyword id="KW-0602">Photosynthesis</keyword>
<keyword id="KW-0604">Photosystem II</keyword>
<keyword id="KW-0793">Thylakoid</keyword>
<keyword id="KW-0812">Transmembrane</keyword>
<keyword id="KW-1133">Transmembrane helix</keyword>
<organism>
    <name type="scientific">Parasynechococcus marenigrum (strain WH8102)</name>
    <dbReference type="NCBI Taxonomy" id="84588"/>
    <lineage>
        <taxon>Bacteria</taxon>
        <taxon>Bacillati</taxon>
        <taxon>Cyanobacteriota</taxon>
        <taxon>Cyanophyceae</taxon>
        <taxon>Synechococcales</taxon>
        <taxon>Prochlorococcaceae</taxon>
        <taxon>Parasynechococcus</taxon>
        <taxon>Parasynechococcus marenigrum</taxon>
    </lineage>
</organism>
<dbReference type="EMBL" id="BX569689">
    <property type="protein sequence ID" value="CAE06784.1"/>
    <property type="molecule type" value="Genomic_DNA"/>
</dbReference>
<dbReference type="RefSeq" id="WP_006849996.1">
    <property type="nucleotide sequence ID" value="NC_005070.1"/>
</dbReference>
<dbReference type="SMR" id="Q7U9I7"/>
<dbReference type="STRING" id="84588.SYNW0269"/>
<dbReference type="KEGG" id="syw:SYNW0269"/>
<dbReference type="eggNOG" id="ENOG50332MV">
    <property type="taxonomic scope" value="Bacteria"/>
</dbReference>
<dbReference type="HOGENOM" id="CLU_190203_0_0_3"/>
<dbReference type="BioCyc" id="MetaCyc:TX72_RS01345-MONOMER"/>
<dbReference type="Proteomes" id="UP000001422">
    <property type="component" value="Chromosome"/>
</dbReference>
<dbReference type="GO" id="GO:0009523">
    <property type="term" value="C:photosystem II"/>
    <property type="evidence" value="ECO:0007669"/>
    <property type="project" value="UniProtKB-KW"/>
</dbReference>
<dbReference type="GO" id="GO:0031676">
    <property type="term" value="C:plasma membrane-derived thylakoid membrane"/>
    <property type="evidence" value="ECO:0007669"/>
    <property type="project" value="UniProtKB-SubCell"/>
</dbReference>
<dbReference type="GO" id="GO:0042301">
    <property type="term" value="F:phosphate ion binding"/>
    <property type="evidence" value="ECO:0007669"/>
    <property type="project" value="InterPro"/>
</dbReference>
<dbReference type="GO" id="GO:0015979">
    <property type="term" value="P:photosynthesis"/>
    <property type="evidence" value="ECO:0007669"/>
    <property type="project" value="UniProtKB-UniRule"/>
</dbReference>
<dbReference type="GO" id="GO:0050821">
    <property type="term" value="P:protein stabilization"/>
    <property type="evidence" value="ECO:0007669"/>
    <property type="project" value="InterPro"/>
</dbReference>
<dbReference type="Gene3D" id="1.20.5.880">
    <property type="entry name" value="Photosystem II reaction center protein H"/>
    <property type="match status" value="1"/>
</dbReference>
<dbReference type="HAMAP" id="MF_00752">
    <property type="entry name" value="PSII_PsbH"/>
    <property type="match status" value="1"/>
</dbReference>
<dbReference type="InterPro" id="IPR001056">
    <property type="entry name" value="PSII_PsbH"/>
</dbReference>
<dbReference type="InterPro" id="IPR036863">
    <property type="entry name" value="PSII_PsbH_sf"/>
</dbReference>
<dbReference type="NCBIfam" id="NF002728">
    <property type="entry name" value="PRK02624.1"/>
    <property type="match status" value="1"/>
</dbReference>
<dbReference type="PANTHER" id="PTHR34469">
    <property type="entry name" value="PHOTOSYSTEM II REACTION CENTER PROTEIN H"/>
    <property type="match status" value="1"/>
</dbReference>
<dbReference type="PANTHER" id="PTHR34469:SF4">
    <property type="entry name" value="PHOTOSYSTEM II REACTION CENTER PROTEIN H"/>
    <property type="match status" value="1"/>
</dbReference>
<dbReference type="Pfam" id="PF00737">
    <property type="entry name" value="PsbH"/>
    <property type="match status" value="1"/>
</dbReference>
<dbReference type="SUPFAM" id="SSF161025">
    <property type="entry name" value="Photosystem II 10 kDa phosphoprotein PsbH"/>
    <property type="match status" value="1"/>
</dbReference>
<protein>
    <recommendedName>
        <fullName evidence="1">Photosystem II reaction center protein H</fullName>
        <shortName evidence="1">PSII-H</shortName>
    </recommendedName>
</protein>
<proteinExistence type="inferred from homology"/>
<gene>
    <name evidence="1" type="primary">psbH</name>
    <name type="ordered locus">SYNW0269</name>
</gene>
<sequence length="66" mass="7391">MAQRTRLGDLLRPLNSEYGKVVPGWGTTPVMGIFMVLFLVFLLVILQLYNKSLILEGINVNWNGLG</sequence>
<reference key="1">
    <citation type="journal article" date="2003" name="Nature">
        <title>The genome of a motile marine Synechococcus.</title>
        <authorList>
            <person name="Palenik B."/>
            <person name="Brahamsha B."/>
            <person name="Larimer F.W."/>
            <person name="Land M.L."/>
            <person name="Hauser L."/>
            <person name="Chain P."/>
            <person name="Lamerdin J.E."/>
            <person name="Regala W."/>
            <person name="Allen E.E."/>
            <person name="McCarren J."/>
            <person name="Paulsen I.T."/>
            <person name="Dufresne A."/>
            <person name="Partensky F."/>
            <person name="Webb E.A."/>
            <person name="Waterbury J."/>
        </authorList>
    </citation>
    <scope>NUCLEOTIDE SEQUENCE [LARGE SCALE GENOMIC DNA]</scope>
    <source>
        <strain>WH8102</strain>
    </source>
</reference>